<keyword id="KW-0324">Glycolysis</keyword>
<keyword id="KW-0413">Isomerase</keyword>
<keyword id="KW-0464">Manganese</keyword>
<keyword id="KW-0479">Metal-binding</keyword>
<sequence length="512" mass="56613">MSKKPVMLMILDGFGISPNKEGNAVAAANKPNYDRLFAKYPHTELQASGLEVGLPEGQMGNSEVGHLNIGAGRIIYQELTRITKEIKEGTFFTNKALVKAMDEAKENNTSLHLMGLLSNGGVHSHIDHLKGLLELAKKKGLQKVYVHAFMDGRDVAPSSGKEFIVELENAMKEIGVGEIATISGRYYAMDRDNRWERVELAYNAMVLGEGEKASSAVEAIEKSYHDNKTDEFVLPTVIEEDGHPVARIKDGDSVIFFNFRPDRAREITRAIVDPEFKGFERKQLHVNFVCMTQYDKTLECVDVAYRPESYTNTLGEYVASKGLNQLRIAETEKYAHVTFFFNGGVEQPNTNEDRALIASPKVATYDLKPEMSAYEVTDELINRLDQDKYDMIILNFANPDMVGHTGVQEAAVKAIEAVDECLGKVADKVLEKEGTLFITADHGNAEVMIDYSTGKPMTAHTSDPVPFLWVSKDAEGKSLKDGGKLADIAPTMLTVMGLEVPSEMTGTCLLNK</sequence>
<protein>
    <recommendedName>
        <fullName evidence="1">2,3-bisphosphoglycerate-independent phosphoglycerate mutase</fullName>
        <shortName evidence="1">BPG-independent PGAM</shortName>
        <shortName evidence="1">Phosphoglyceromutase</shortName>
        <shortName evidence="1">iPGM</shortName>
        <ecNumber evidence="1">5.4.2.12</ecNumber>
    </recommendedName>
</protein>
<dbReference type="EC" id="5.4.2.12" evidence="1"/>
<dbReference type="EMBL" id="CP000246">
    <property type="protein sequence ID" value="ABG85053.1"/>
    <property type="molecule type" value="Genomic_DNA"/>
</dbReference>
<dbReference type="RefSeq" id="WP_011590746.1">
    <property type="nucleotide sequence ID" value="NC_008261.1"/>
</dbReference>
<dbReference type="SMR" id="Q0TQY9"/>
<dbReference type="STRING" id="195103.CPF_1508"/>
<dbReference type="PaxDb" id="195103-CPF_1508"/>
<dbReference type="GeneID" id="93002164"/>
<dbReference type="KEGG" id="cpf:CPF_1508"/>
<dbReference type="eggNOG" id="COG0696">
    <property type="taxonomic scope" value="Bacteria"/>
</dbReference>
<dbReference type="HOGENOM" id="CLU_026099_2_0_9"/>
<dbReference type="UniPathway" id="UPA00109">
    <property type="reaction ID" value="UER00186"/>
</dbReference>
<dbReference type="Proteomes" id="UP000001823">
    <property type="component" value="Chromosome"/>
</dbReference>
<dbReference type="GO" id="GO:0005829">
    <property type="term" value="C:cytosol"/>
    <property type="evidence" value="ECO:0007669"/>
    <property type="project" value="TreeGrafter"/>
</dbReference>
<dbReference type="GO" id="GO:0030145">
    <property type="term" value="F:manganese ion binding"/>
    <property type="evidence" value="ECO:0007669"/>
    <property type="project" value="UniProtKB-UniRule"/>
</dbReference>
<dbReference type="GO" id="GO:0004619">
    <property type="term" value="F:phosphoglycerate mutase activity"/>
    <property type="evidence" value="ECO:0007669"/>
    <property type="project" value="UniProtKB-EC"/>
</dbReference>
<dbReference type="GO" id="GO:0006007">
    <property type="term" value="P:glucose catabolic process"/>
    <property type="evidence" value="ECO:0007669"/>
    <property type="project" value="InterPro"/>
</dbReference>
<dbReference type="GO" id="GO:0006096">
    <property type="term" value="P:glycolytic process"/>
    <property type="evidence" value="ECO:0007669"/>
    <property type="project" value="UniProtKB-UniRule"/>
</dbReference>
<dbReference type="CDD" id="cd16010">
    <property type="entry name" value="iPGM"/>
    <property type="match status" value="1"/>
</dbReference>
<dbReference type="FunFam" id="3.40.1450.10:FF:000001">
    <property type="entry name" value="2,3-bisphosphoglycerate-independent phosphoglycerate mutase"/>
    <property type="match status" value="1"/>
</dbReference>
<dbReference type="FunFam" id="3.40.720.10:FF:000001">
    <property type="entry name" value="2,3-bisphosphoglycerate-independent phosphoglycerate mutase"/>
    <property type="match status" value="1"/>
</dbReference>
<dbReference type="Gene3D" id="3.40.720.10">
    <property type="entry name" value="Alkaline Phosphatase, subunit A"/>
    <property type="match status" value="1"/>
</dbReference>
<dbReference type="Gene3D" id="3.40.1450.10">
    <property type="entry name" value="BPG-independent phosphoglycerate mutase, domain B"/>
    <property type="match status" value="1"/>
</dbReference>
<dbReference type="HAMAP" id="MF_01038">
    <property type="entry name" value="GpmI"/>
    <property type="match status" value="1"/>
</dbReference>
<dbReference type="InterPro" id="IPR017850">
    <property type="entry name" value="Alkaline_phosphatase_core_sf"/>
</dbReference>
<dbReference type="InterPro" id="IPR011258">
    <property type="entry name" value="BPG-indep_PGM_N"/>
</dbReference>
<dbReference type="InterPro" id="IPR006124">
    <property type="entry name" value="Metalloenzyme"/>
</dbReference>
<dbReference type="InterPro" id="IPR036646">
    <property type="entry name" value="PGAM_B_sf"/>
</dbReference>
<dbReference type="InterPro" id="IPR005995">
    <property type="entry name" value="Pgm_bpd_ind"/>
</dbReference>
<dbReference type="NCBIfam" id="TIGR01307">
    <property type="entry name" value="pgm_bpd_ind"/>
    <property type="match status" value="1"/>
</dbReference>
<dbReference type="PANTHER" id="PTHR31637">
    <property type="entry name" value="2,3-BISPHOSPHOGLYCERATE-INDEPENDENT PHOSPHOGLYCERATE MUTASE"/>
    <property type="match status" value="1"/>
</dbReference>
<dbReference type="PANTHER" id="PTHR31637:SF0">
    <property type="entry name" value="2,3-BISPHOSPHOGLYCERATE-INDEPENDENT PHOSPHOGLYCERATE MUTASE"/>
    <property type="match status" value="1"/>
</dbReference>
<dbReference type="Pfam" id="PF06415">
    <property type="entry name" value="iPGM_N"/>
    <property type="match status" value="1"/>
</dbReference>
<dbReference type="Pfam" id="PF01676">
    <property type="entry name" value="Metalloenzyme"/>
    <property type="match status" value="1"/>
</dbReference>
<dbReference type="PIRSF" id="PIRSF001492">
    <property type="entry name" value="IPGAM"/>
    <property type="match status" value="1"/>
</dbReference>
<dbReference type="SUPFAM" id="SSF64158">
    <property type="entry name" value="2,3-Bisphosphoglycerate-independent phosphoglycerate mutase, substrate-binding domain"/>
    <property type="match status" value="1"/>
</dbReference>
<dbReference type="SUPFAM" id="SSF53649">
    <property type="entry name" value="Alkaline phosphatase-like"/>
    <property type="match status" value="1"/>
</dbReference>
<comment type="function">
    <text evidence="1">Catalyzes the interconversion of 2-phosphoglycerate and 3-phosphoglycerate.</text>
</comment>
<comment type="catalytic activity">
    <reaction evidence="1">
        <text>(2R)-2-phosphoglycerate = (2R)-3-phosphoglycerate</text>
        <dbReference type="Rhea" id="RHEA:15901"/>
        <dbReference type="ChEBI" id="CHEBI:58272"/>
        <dbReference type="ChEBI" id="CHEBI:58289"/>
        <dbReference type="EC" id="5.4.2.12"/>
    </reaction>
</comment>
<comment type="cofactor">
    <cofactor evidence="1">
        <name>Mn(2+)</name>
        <dbReference type="ChEBI" id="CHEBI:29035"/>
    </cofactor>
    <text evidence="1">Binds 2 manganese ions per subunit.</text>
</comment>
<comment type="pathway">
    <text evidence="1">Carbohydrate degradation; glycolysis; pyruvate from D-glyceraldehyde 3-phosphate: step 3/5.</text>
</comment>
<comment type="subunit">
    <text evidence="1">Monomer.</text>
</comment>
<comment type="similarity">
    <text evidence="1">Belongs to the BPG-independent phosphoglycerate mutase family.</text>
</comment>
<organism>
    <name type="scientific">Clostridium perfringens (strain ATCC 13124 / DSM 756 / JCM 1290 / NCIMB 6125 / NCTC 8237 / Type A)</name>
    <dbReference type="NCBI Taxonomy" id="195103"/>
    <lineage>
        <taxon>Bacteria</taxon>
        <taxon>Bacillati</taxon>
        <taxon>Bacillota</taxon>
        <taxon>Clostridia</taxon>
        <taxon>Eubacteriales</taxon>
        <taxon>Clostridiaceae</taxon>
        <taxon>Clostridium</taxon>
    </lineage>
</organism>
<gene>
    <name evidence="1" type="primary">gpmI</name>
    <name type="ordered locus">CPF_1508</name>
</gene>
<evidence type="ECO:0000255" key="1">
    <source>
        <dbReference type="HAMAP-Rule" id="MF_01038"/>
    </source>
</evidence>
<name>GPMI_CLOP1</name>
<reference key="1">
    <citation type="journal article" date="2006" name="Genome Res.">
        <title>Skewed genomic variability in strains of the toxigenic bacterial pathogen, Clostridium perfringens.</title>
        <authorList>
            <person name="Myers G.S.A."/>
            <person name="Rasko D.A."/>
            <person name="Cheung J.K."/>
            <person name="Ravel J."/>
            <person name="Seshadri R."/>
            <person name="DeBoy R.T."/>
            <person name="Ren Q."/>
            <person name="Varga J."/>
            <person name="Awad M.M."/>
            <person name="Brinkac L.M."/>
            <person name="Daugherty S.C."/>
            <person name="Haft D.H."/>
            <person name="Dodson R.J."/>
            <person name="Madupu R."/>
            <person name="Nelson W.C."/>
            <person name="Rosovitz M.J."/>
            <person name="Sullivan S.A."/>
            <person name="Khouri H."/>
            <person name="Dimitrov G.I."/>
            <person name="Watkins K.L."/>
            <person name="Mulligan S."/>
            <person name="Benton J."/>
            <person name="Radune D."/>
            <person name="Fisher D.J."/>
            <person name="Atkins H.S."/>
            <person name="Hiscox T."/>
            <person name="Jost B.H."/>
            <person name="Billington S.J."/>
            <person name="Songer J.G."/>
            <person name="McClane B.A."/>
            <person name="Titball R.W."/>
            <person name="Rood J.I."/>
            <person name="Melville S.B."/>
            <person name="Paulsen I.T."/>
        </authorList>
    </citation>
    <scope>NUCLEOTIDE SEQUENCE [LARGE SCALE GENOMIC DNA]</scope>
    <source>
        <strain>ATCC 13124 / DSM 756 / JCM 1290 / NCIMB 6125 / NCTC 8237 / S 107 / Type A</strain>
    </source>
</reference>
<proteinExistence type="inferred from homology"/>
<accession>Q0TQY9</accession>
<feature type="chain" id="PRO_1000063957" description="2,3-bisphosphoglycerate-independent phosphoglycerate mutase">
    <location>
        <begin position="1"/>
        <end position="512"/>
    </location>
</feature>
<feature type="active site" description="Phosphoserine intermediate" evidence="1">
    <location>
        <position position="62"/>
    </location>
</feature>
<feature type="binding site" evidence="1">
    <location>
        <position position="12"/>
    </location>
    <ligand>
        <name>Mn(2+)</name>
        <dbReference type="ChEBI" id="CHEBI:29035"/>
        <label>2</label>
    </ligand>
</feature>
<feature type="binding site" evidence="1">
    <location>
        <position position="62"/>
    </location>
    <ligand>
        <name>Mn(2+)</name>
        <dbReference type="ChEBI" id="CHEBI:29035"/>
        <label>2</label>
    </ligand>
</feature>
<feature type="binding site" evidence="1">
    <location>
        <position position="123"/>
    </location>
    <ligand>
        <name>substrate</name>
    </ligand>
</feature>
<feature type="binding site" evidence="1">
    <location>
        <begin position="153"/>
        <end position="154"/>
    </location>
    <ligand>
        <name>substrate</name>
    </ligand>
</feature>
<feature type="binding site" evidence="1">
    <location>
        <position position="185"/>
    </location>
    <ligand>
        <name>substrate</name>
    </ligand>
</feature>
<feature type="binding site" evidence="1">
    <location>
        <position position="191"/>
    </location>
    <ligand>
        <name>substrate</name>
    </ligand>
</feature>
<feature type="binding site" evidence="1">
    <location>
        <begin position="260"/>
        <end position="263"/>
    </location>
    <ligand>
        <name>substrate</name>
    </ligand>
</feature>
<feature type="binding site" evidence="1">
    <location>
        <position position="333"/>
    </location>
    <ligand>
        <name>substrate</name>
    </ligand>
</feature>
<feature type="binding site" evidence="1">
    <location>
        <position position="400"/>
    </location>
    <ligand>
        <name>Mn(2+)</name>
        <dbReference type="ChEBI" id="CHEBI:29035"/>
        <label>1</label>
    </ligand>
</feature>
<feature type="binding site" evidence="1">
    <location>
        <position position="404"/>
    </location>
    <ligand>
        <name>Mn(2+)</name>
        <dbReference type="ChEBI" id="CHEBI:29035"/>
        <label>1</label>
    </ligand>
</feature>
<feature type="binding site" evidence="1">
    <location>
        <position position="441"/>
    </location>
    <ligand>
        <name>Mn(2+)</name>
        <dbReference type="ChEBI" id="CHEBI:29035"/>
        <label>2</label>
    </ligand>
</feature>
<feature type="binding site" evidence="1">
    <location>
        <position position="442"/>
    </location>
    <ligand>
        <name>Mn(2+)</name>
        <dbReference type="ChEBI" id="CHEBI:29035"/>
        <label>2</label>
    </ligand>
</feature>
<feature type="binding site" evidence="1">
    <location>
        <position position="460"/>
    </location>
    <ligand>
        <name>Mn(2+)</name>
        <dbReference type="ChEBI" id="CHEBI:29035"/>
        <label>1</label>
    </ligand>
</feature>